<protein>
    <recommendedName>
        <fullName evidence="1">Small ribosomal subunit protein bS21</fullName>
    </recommendedName>
    <alternativeName>
        <fullName evidence="2">30S ribosomal protein S21</fullName>
    </alternativeName>
</protein>
<accession>B5XKR6</accession>
<gene>
    <name evidence="1" type="primary">rpsU</name>
    <name type="ordered locus">Spy49_0606</name>
</gene>
<proteinExistence type="inferred from homology"/>
<organism>
    <name type="scientific">Streptococcus pyogenes serotype M49 (strain NZ131)</name>
    <dbReference type="NCBI Taxonomy" id="471876"/>
    <lineage>
        <taxon>Bacteria</taxon>
        <taxon>Bacillati</taxon>
        <taxon>Bacillota</taxon>
        <taxon>Bacilli</taxon>
        <taxon>Lactobacillales</taxon>
        <taxon>Streptococcaceae</taxon>
        <taxon>Streptococcus</taxon>
    </lineage>
</organism>
<comment type="similarity">
    <text evidence="1">Belongs to the bacterial ribosomal protein bS21 family.</text>
</comment>
<dbReference type="EMBL" id="CP000829">
    <property type="protein sequence ID" value="ACI60928.1"/>
    <property type="molecule type" value="Genomic_DNA"/>
</dbReference>
<dbReference type="SMR" id="B5XKR6"/>
<dbReference type="KEGG" id="soz:Spy49_0606"/>
<dbReference type="HOGENOM" id="CLU_159258_3_2_9"/>
<dbReference type="Proteomes" id="UP000001039">
    <property type="component" value="Chromosome"/>
</dbReference>
<dbReference type="GO" id="GO:1990904">
    <property type="term" value="C:ribonucleoprotein complex"/>
    <property type="evidence" value="ECO:0007669"/>
    <property type="project" value="UniProtKB-KW"/>
</dbReference>
<dbReference type="GO" id="GO:0005840">
    <property type="term" value="C:ribosome"/>
    <property type="evidence" value="ECO:0007669"/>
    <property type="project" value="UniProtKB-KW"/>
</dbReference>
<dbReference type="GO" id="GO:0003735">
    <property type="term" value="F:structural constituent of ribosome"/>
    <property type="evidence" value="ECO:0007669"/>
    <property type="project" value="InterPro"/>
</dbReference>
<dbReference type="GO" id="GO:0006412">
    <property type="term" value="P:translation"/>
    <property type="evidence" value="ECO:0007669"/>
    <property type="project" value="UniProtKB-UniRule"/>
</dbReference>
<dbReference type="Gene3D" id="1.20.5.1150">
    <property type="entry name" value="Ribosomal protein S8"/>
    <property type="match status" value="1"/>
</dbReference>
<dbReference type="HAMAP" id="MF_00358">
    <property type="entry name" value="Ribosomal_bS21"/>
    <property type="match status" value="1"/>
</dbReference>
<dbReference type="InterPro" id="IPR001911">
    <property type="entry name" value="Ribosomal_bS21"/>
</dbReference>
<dbReference type="InterPro" id="IPR018278">
    <property type="entry name" value="Ribosomal_bS21_CS"/>
</dbReference>
<dbReference type="InterPro" id="IPR038380">
    <property type="entry name" value="Ribosomal_bS21_sf"/>
</dbReference>
<dbReference type="NCBIfam" id="TIGR00030">
    <property type="entry name" value="S21p"/>
    <property type="match status" value="1"/>
</dbReference>
<dbReference type="PANTHER" id="PTHR21109">
    <property type="entry name" value="MITOCHONDRIAL 28S RIBOSOMAL PROTEIN S21"/>
    <property type="match status" value="1"/>
</dbReference>
<dbReference type="PANTHER" id="PTHR21109:SF22">
    <property type="entry name" value="SMALL RIBOSOMAL SUBUNIT PROTEIN BS21"/>
    <property type="match status" value="1"/>
</dbReference>
<dbReference type="Pfam" id="PF01165">
    <property type="entry name" value="Ribosomal_S21"/>
    <property type="match status" value="1"/>
</dbReference>
<dbReference type="PRINTS" id="PR00976">
    <property type="entry name" value="RIBOSOMALS21"/>
</dbReference>
<dbReference type="PROSITE" id="PS01181">
    <property type="entry name" value="RIBOSOMAL_S21"/>
    <property type="match status" value="1"/>
</dbReference>
<evidence type="ECO:0000255" key="1">
    <source>
        <dbReference type="HAMAP-Rule" id="MF_00358"/>
    </source>
</evidence>
<evidence type="ECO:0000305" key="2"/>
<name>RS21_STRPZ</name>
<reference key="1">
    <citation type="journal article" date="2008" name="J. Bacteriol.">
        <title>Genome sequence of a nephritogenic and highly transformable M49 strain of Streptococcus pyogenes.</title>
        <authorList>
            <person name="McShan W.M."/>
            <person name="Ferretti J.J."/>
            <person name="Karasawa T."/>
            <person name="Suvorov A.N."/>
            <person name="Lin S."/>
            <person name="Qin B."/>
            <person name="Jia H."/>
            <person name="Kenton S."/>
            <person name="Najar F."/>
            <person name="Wu H."/>
            <person name="Scott J."/>
            <person name="Roe B.A."/>
            <person name="Savic D.J."/>
        </authorList>
    </citation>
    <scope>NUCLEOTIDE SEQUENCE [LARGE SCALE GENOMIC DNA]</scope>
    <source>
        <strain>NZ131</strain>
    </source>
</reference>
<feature type="chain" id="PRO_1000120669" description="Small ribosomal subunit protein bS21">
    <location>
        <begin position="1"/>
        <end position="58"/>
    </location>
</feature>
<keyword id="KW-0687">Ribonucleoprotein</keyword>
<keyword id="KW-0689">Ribosomal protein</keyword>
<sequence length="58" mass="6988">MSKTVVRKNESLDDALRRFKRSVTKAGTLQESRKREFYEKLSVKRKRKSEAARKRKKF</sequence>